<proteinExistence type="inferred from homology"/>
<accession>Q0T6U0</accession>
<gene>
    <name evidence="1" type="primary">kdpC</name>
    <name type="ordered locus">SFV_0637</name>
</gene>
<sequence length="190" mass="20341">MSGLRPALSTFLFLLLITGGVYPLLTTALGQWWYPWQANGSLIREGDTVRGSALIGQNFTGNGYFHGRPSATAEMPYNPQASGGSNLAVSNPELDKQIAARVAALRAANPDASTNVPVELVTASASGLDNNITPQAAAWQIPRIAKARNLSVEQLTQLIAKYSQQPLVKYIGQPVVNIVELNLALDKLDE</sequence>
<keyword id="KW-0067">ATP-binding</keyword>
<keyword id="KW-0997">Cell inner membrane</keyword>
<keyword id="KW-1003">Cell membrane</keyword>
<keyword id="KW-0406">Ion transport</keyword>
<keyword id="KW-0472">Membrane</keyword>
<keyword id="KW-0547">Nucleotide-binding</keyword>
<keyword id="KW-0630">Potassium</keyword>
<keyword id="KW-0633">Potassium transport</keyword>
<keyword id="KW-0812">Transmembrane</keyword>
<keyword id="KW-1133">Transmembrane helix</keyword>
<keyword id="KW-0813">Transport</keyword>
<protein>
    <recommendedName>
        <fullName evidence="1">Potassium-transporting ATPase KdpC subunit</fullName>
    </recommendedName>
    <alternativeName>
        <fullName evidence="1">ATP phosphohydrolase [potassium-transporting] C chain</fullName>
    </alternativeName>
    <alternativeName>
        <fullName evidence="1">Potassium-binding and translocating subunit C</fullName>
    </alternativeName>
    <alternativeName>
        <fullName evidence="1">Potassium-translocating ATPase C chain</fullName>
    </alternativeName>
</protein>
<reference key="1">
    <citation type="journal article" date="2006" name="BMC Genomics">
        <title>Complete genome sequence of Shigella flexneri 5b and comparison with Shigella flexneri 2a.</title>
        <authorList>
            <person name="Nie H."/>
            <person name="Yang F."/>
            <person name="Zhang X."/>
            <person name="Yang J."/>
            <person name="Chen L."/>
            <person name="Wang J."/>
            <person name="Xiong Z."/>
            <person name="Peng J."/>
            <person name="Sun L."/>
            <person name="Dong J."/>
            <person name="Xue Y."/>
            <person name="Xu X."/>
            <person name="Chen S."/>
            <person name="Yao Z."/>
            <person name="Shen Y."/>
            <person name="Jin Q."/>
        </authorList>
    </citation>
    <scope>NUCLEOTIDE SEQUENCE [LARGE SCALE GENOMIC DNA]</scope>
    <source>
        <strain>8401</strain>
    </source>
</reference>
<dbReference type="EMBL" id="CP000266">
    <property type="protein sequence ID" value="ABF02886.1"/>
    <property type="molecule type" value="Genomic_DNA"/>
</dbReference>
<dbReference type="RefSeq" id="WP_000016100.1">
    <property type="nucleotide sequence ID" value="NC_008258.1"/>
</dbReference>
<dbReference type="SMR" id="Q0T6U0"/>
<dbReference type="KEGG" id="sfv:SFV_0637"/>
<dbReference type="HOGENOM" id="CLU_077094_2_0_6"/>
<dbReference type="Proteomes" id="UP000000659">
    <property type="component" value="Chromosome"/>
</dbReference>
<dbReference type="GO" id="GO:0005886">
    <property type="term" value="C:plasma membrane"/>
    <property type="evidence" value="ECO:0007669"/>
    <property type="project" value="UniProtKB-SubCell"/>
</dbReference>
<dbReference type="GO" id="GO:0005524">
    <property type="term" value="F:ATP binding"/>
    <property type="evidence" value="ECO:0007669"/>
    <property type="project" value="UniProtKB-UniRule"/>
</dbReference>
<dbReference type="GO" id="GO:0008556">
    <property type="term" value="F:P-type potassium transmembrane transporter activity"/>
    <property type="evidence" value="ECO:0007669"/>
    <property type="project" value="InterPro"/>
</dbReference>
<dbReference type="HAMAP" id="MF_00276">
    <property type="entry name" value="KdpC"/>
    <property type="match status" value="1"/>
</dbReference>
<dbReference type="InterPro" id="IPR003820">
    <property type="entry name" value="KdpC"/>
</dbReference>
<dbReference type="NCBIfam" id="TIGR00681">
    <property type="entry name" value="kdpC"/>
    <property type="match status" value="1"/>
</dbReference>
<dbReference type="NCBIfam" id="NF001454">
    <property type="entry name" value="PRK00315.1"/>
    <property type="match status" value="1"/>
</dbReference>
<dbReference type="PANTHER" id="PTHR30042">
    <property type="entry name" value="POTASSIUM-TRANSPORTING ATPASE C CHAIN"/>
    <property type="match status" value="1"/>
</dbReference>
<dbReference type="PANTHER" id="PTHR30042:SF2">
    <property type="entry name" value="POTASSIUM-TRANSPORTING ATPASE KDPC SUBUNIT"/>
    <property type="match status" value="1"/>
</dbReference>
<dbReference type="Pfam" id="PF02669">
    <property type="entry name" value="KdpC"/>
    <property type="match status" value="1"/>
</dbReference>
<dbReference type="PIRSF" id="PIRSF001296">
    <property type="entry name" value="K_ATPase_KdpC"/>
    <property type="match status" value="1"/>
</dbReference>
<evidence type="ECO:0000255" key="1">
    <source>
        <dbReference type="HAMAP-Rule" id="MF_00276"/>
    </source>
</evidence>
<name>KDPC_SHIF8</name>
<comment type="function">
    <text evidence="1">Part of the high-affinity ATP-driven potassium transport (or Kdp) system, which catalyzes the hydrolysis of ATP coupled with the electrogenic transport of potassium into the cytoplasm. This subunit acts as a catalytic chaperone that increases the ATP-binding affinity of the ATP-hydrolyzing subunit KdpB by the formation of a transient KdpB/KdpC/ATP ternary complex.</text>
</comment>
<comment type="subunit">
    <text evidence="1">The system is composed of three essential subunits: KdpA, KdpB and KdpC.</text>
</comment>
<comment type="subcellular location">
    <subcellularLocation>
        <location evidence="1">Cell inner membrane</location>
        <topology evidence="1">Single-pass membrane protein</topology>
    </subcellularLocation>
</comment>
<comment type="similarity">
    <text evidence="1">Belongs to the KdpC family.</text>
</comment>
<organism>
    <name type="scientific">Shigella flexneri serotype 5b (strain 8401)</name>
    <dbReference type="NCBI Taxonomy" id="373384"/>
    <lineage>
        <taxon>Bacteria</taxon>
        <taxon>Pseudomonadati</taxon>
        <taxon>Pseudomonadota</taxon>
        <taxon>Gammaproteobacteria</taxon>
        <taxon>Enterobacterales</taxon>
        <taxon>Enterobacteriaceae</taxon>
        <taxon>Shigella</taxon>
    </lineage>
</organism>
<feature type="chain" id="PRO_1000022315" description="Potassium-transporting ATPase KdpC subunit">
    <location>
        <begin position="1"/>
        <end position="190"/>
    </location>
</feature>
<feature type="transmembrane region" description="Helical" evidence="1">
    <location>
        <begin position="10"/>
        <end position="30"/>
    </location>
</feature>